<name>2SSL_RICCO</name>
<sequence>QDYCAQEGQQEVQRKDLSDLERYLRQSRQR</sequence>
<proteinExistence type="evidence at protein level"/>
<organism>
    <name type="scientific">Ricinus communis</name>
    <name type="common">Castor bean</name>
    <dbReference type="NCBI Taxonomy" id="3988"/>
    <lineage>
        <taxon>Eukaryota</taxon>
        <taxon>Viridiplantae</taxon>
        <taxon>Streptophyta</taxon>
        <taxon>Embryophyta</taxon>
        <taxon>Tracheophyta</taxon>
        <taxon>Spermatophyta</taxon>
        <taxon>Magnoliopsida</taxon>
        <taxon>eudicotyledons</taxon>
        <taxon>Gunneridae</taxon>
        <taxon>Pentapetalae</taxon>
        <taxon>rosids</taxon>
        <taxon>fabids</taxon>
        <taxon>Malpighiales</taxon>
        <taxon>Euphorbiaceae</taxon>
        <taxon>Acalyphoideae</taxon>
        <taxon>Acalypheae</taxon>
        <taxon>Ricinus</taxon>
    </lineage>
</organism>
<reference evidence="4" key="1">
    <citation type="thesis" date="2012" institute="Federal University of Ceara" country="Brazil">
        <title>Purification, biochemical characterization and antimicrobial activity of a novel 2s albumin from castor bean (Ricinus communis l.) cake displaying trypsin inhibitory activity.</title>
        <authorList>
            <person name="Pedro P.F.N.S."/>
        </authorList>
    </citation>
    <scope>PROTEIN SEQUENCE</scope>
    <scope>FUNCTION</scope>
    <scope>TISSUE SPECIFICITY</scope>
    <scope>SUBUNIT</scope>
    <source>
        <tissue evidence="2">Seed</tissue>
    </source>
</reference>
<protein>
    <recommendedName>
        <fullName evidence="3">2S seed storage-like protein</fullName>
    </recommendedName>
    <alternativeName>
        <fullName evidence="3">2S albumin storage-like protein</fullName>
        <shortName evidence="3">Rc-2S-Alb</shortName>
    </alternativeName>
</protein>
<feature type="chain" id="PRO_0000419047" description="2S seed storage-like protein">
    <location>
        <begin position="1"/>
        <end position="30" status="greater than"/>
    </location>
</feature>
<feature type="non-terminal residue" evidence="3">
    <location>
        <position position="30"/>
    </location>
</feature>
<accession>B3EWN4</accession>
<dbReference type="GO" id="GO:0045735">
    <property type="term" value="F:nutrient reservoir activity"/>
    <property type="evidence" value="ECO:0007669"/>
    <property type="project" value="UniProtKB-KW"/>
</dbReference>
<evidence type="ECO:0000255" key="1"/>
<evidence type="ECO:0000269" key="2">
    <source ref="1"/>
</evidence>
<evidence type="ECO:0000303" key="3">
    <source ref="1"/>
</evidence>
<evidence type="ECO:0000305" key="4"/>
<keyword id="KW-0903">Direct protein sequencing</keyword>
<keyword id="KW-1015">Disulfide bond</keyword>
<keyword id="KW-0708">Seed storage protein</keyword>
<keyword id="KW-0758">Storage protein</keyword>
<comment type="function">
    <text evidence="2">This is a 2S seed storage protein. Inhibits spore germination in R.solani and F.oxysporum. Exhibits anti-trypsin activity.</text>
</comment>
<comment type="subunit">
    <text evidence="2">The mature protein is a heterodimer of a small and a large chain linked by 2 disulfide bonds.</text>
</comment>
<comment type="tissue specificity">
    <text evidence="2">Extracted from castor bean.</text>
</comment>
<comment type="similarity">
    <text evidence="1">Belongs to the 2S seed storage albumins family.</text>
</comment>